<gene>
    <name type="primary">CDH1</name>
</gene>
<protein>
    <recommendedName>
        <fullName>Cadherin-1</fullName>
    </recommendedName>
    <alternativeName>
        <fullName>Epithelial cadherin</fullName>
        <shortName>E-cadherin</shortName>
    </alternativeName>
    <alternativeName>
        <fullName>Uvomorulin</fullName>
    </alternativeName>
    <cdAntigenName>CD324</cdAntigenName>
    <component>
        <recommendedName>
            <fullName>E-Cad/CTF1</fullName>
        </recommendedName>
    </component>
    <component>
        <recommendedName>
            <fullName>E-Cad/CTF2</fullName>
        </recommendedName>
    </component>
    <component>
        <recommendedName>
            <fullName>E-Cad/CTF3</fullName>
        </recommendedName>
    </component>
</protein>
<feature type="signal peptide" evidence="5">
    <location>
        <begin position="1"/>
        <end position="26"/>
    </location>
</feature>
<feature type="propeptide" id="PRO_0000423875" evidence="5">
    <location>
        <begin position="27"/>
        <end position="156"/>
    </location>
</feature>
<feature type="chain" id="PRO_0000424033" description="Cadherin-1">
    <location>
        <begin position="157"/>
        <end position="885"/>
    </location>
</feature>
<feature type="chain" id="PRO_0000424034" description="E-Cad/CTF1" evidence="5">
    <location>
        <begin position="704"/>
        <end position="885"/>
    </location>
</feature>
<feature type="chain" id="PRO_0000424035" description="E-Cad/CTF2" evidence="5">
    <location>
        <begin position="735"/>
        <end position="885"/>
    </location>
</feature>
<feature type="chain" id="PRO_0000424036" description="E-Cad/CTF3" evidence="5">
    <location>
        <begin position="754"/>
        <end position="885"/>
    </location>
</feature>
<feature type="topological domain" description="Extracellular" evidence="5">
    <location>
        <begin position="157"/>
        <end position="712"/>
    </location>
</feature>
<feature type="transmembrane region" description="Helical" evidence="5">
    <location>
        <begin position="713"/>
        <end position="733"/>
    </location>
</feature>
<feature type="topological domain" description="Cytoplasmic" evidence="5">
    <location>
        <begin position="734"/>
        <end position="885"/>
    </location>
</feature>
<feature type="domain" description="Cadherin 1" evidence="6">
    <location>
        <begin position="158"/>
        <end position="264"/>
    </location>
</feature>
<feature type="domain" description="Cadherin 2" evidence="6">
    <location>
        <begin position="265"/>
        <end position="377"/>
    </location>
</feature>
<feature type="domain" description="Cadherin 3" evidence="6">
    <location>
        <begin position="378"/>
        <end position="488"/>
    </location>
</feature>
<feature type="domain" description="Cadherin 4" evidence="6">
    <location>
        <begin position="489"/>
        <end position="597"/>
    </location>
</feature>
<feature type="domain" description="Cadherin 5" evidence="6">
    <location>
        <begin position="607"/>
        <end position="688"/>
    </location>
</feature>
<feature type="region of interest" description="Disordered" evidence="7">
    <location>
        <begin position="121"/>
        <end position="141"/>
    </location>
</feature>
<feature type="region of interest" description="Disordered" evidence="7">
    <location>
        <begin position="750"/>
        <end position="770"/>
    </location>
</feature>
<feature type="region of interest" description="Required for binding CTNND1 and PSEN1" evidence="1">
    <location>
        <begin position="761"/>
        <end position="772"/>
    </location>
</feature>
<feature type="region of interest" description="Disordered" evidence="7">
    <location>
        <begin position="792"/>
        <end position="811"/>
    </location>
</feature>
<feature type="region of interest" description="Required for binding alpha, beta and gamma catenins" evidence="1">
    <location>
        <begin position="814"/>
        <end position="885"/>
    </location>
</feature>
<feature type="compositionally biased region" description="Basic residues" evidence="7">
    <location>
        <begin position="121"/>
        <end position="131"/>
    </location>
</feature>
<feature type="compositionally biased region" description="Acidic residues" evidence="7">
    <location>
        <begin position="758"/>
        <end position="770"/>
    </location>
</feature>
<feature type="binding site" evidence="1">
    <location>
        <position position="259"/>
    </location>
    <ligand>
        <name>Ca(2+)</name>
        <dbReference type="ChEBI" id="CHEBI:29108"/>
        <label>1</label>
    </ligand>
</feature>
<feature type="binding site" evidence="1">
    <location>
        <position position="259"/>
    </location>
    <ligand>
        <name>Ca(2+)</name>
        <dbReference type="ChEBI" id="CHEBI:29108"/>
        <label>2</label>
    </ligand>
</feature>
<feature type="binding site" evidence="1">
    <location>
        <position position="290"/>
    </location>
    <ligand>
        <name>Ca(2+)</name>
        <dbReference type="ChEBI" id="CHEBI:29108"/>
        <label>3</label>
    </ligand>
</feature>
<feature type="site" description="Cleavage; by caspase-3" evidence="1">
    <location>
        <begin position="753"/>
        <end position="754"/>
    </location>
</feature>
<feature type="modified residue" description="Phosphotyrosine; by SRC" evidence="3">
    <location>
        <position position="756"/>
    </location>
</feature>
<feature type="modified residue" description="Phosphotyrosine; by SRC" evidence="3">
    <location>
        <position position="757"/>
    </location>
</feature>
<feature type="modified residue" description="Phosphotyrosine; by SRC" evidence="3">
    <location>
        <position position="758"/>
    </location>
</feature>
<feature type="modified residue" description="Phosphoserine" evidence="3">
    <location>
        <position position="773"/>
    </location>
</feature>
<feature type="modified residue" description="Phosphoserine" evidence="3">
    <location>
        <position position="796"/>
    </location>
</feature>
<feature type="modified residue" description="Phosphoserine" evidence="2">
    <location>
        <position position="841"/>
    </location>
</feature>
<feature type="modified residue" description="Phosphoserine" evidence="2">
    <location>
        <position position="843"/>
    </location>
</feature>
<feature type="modified residue" description="Phosphoserine" evidence="2">
    <location>
        <position position="849"/>
    </location>
</feature>
<feature type="glycosylation site" description="O-linked (Man...) serine" evidence="2">
    <location>
        <position position="282"/>
    </location>
</feature>
<feature type="glycosylation site" description="O-linked (Man...) threonine" evidence="2">
    <location>
        <position position="287"/>
    </location>
</feature>
<feature type="glycosylation site" description="O-linked (Man...) threonine" evidence="2">
    <location>
        <position position="360"/>
    </location>
</feature>
<feature type="glycosylation site" description="O-linked (Man...) threonine" evidence="2">
    <location>
        <position position="472"/>
    </location>
</feature>
<feature type="glycosylation site" description="O-linked (Man...) threonine" evidence="2">
    <location>
        <position position="474"/>
    </location>
</feature>
<feature type="glycosylation site" description="O-linked (Man...) threonine" evidence="2">
    <location>
        <position position="511"/>
    </location>
</feature>
<feature type="glycosylation site" description="N-linked (GlcNAc...) asparagine" evidence="5">
    <location>
        <position position="560"/>
    </location>
</feature>
<feature type="glycosylation site" description="O-linked (Man...) threonine" evidence="2">
    <location>
        <position position="578"/>
    </location>
</feature>
<feature type="glycosylation site" description="O-linked (Man...) threonine" evidence="2">
    <location>
        <position position="580"/>
    </location>
</feature>
<feature type="glycosylation site" description="O-linked (Man...) threonine" evidence="2">
    <location>
        <position position="582"/>
    </location>
</feature>
<feature type="glycosylation site" description="N-linked (GlcNAc...) asparagine" evidence="5">
    <location>
        <position position="639"/>
    </location>
</feature>
<proteinExistence type="evidence at protein level"/>
<evidence type="ECO:0000250" key="1"/>
<evidence type="ECO:0000250" key="2">
    <source>
        <dbReference type="UniProtKB" id="P09803"/>
    </source>
</evidence>
<evidence type="ECO:0000250" key="3">
    <source>
        <dbReference type="UniProtKB" id="P12830"/>
    </source>
</evidence>
<evidence type="ECO:0000250" key="4">
    <source>
        <dbReference type="UniProtKB" id="Q9R0T4"/>
    </source>
</evidence>
<evidence type="ECO:0000255" key="5"/>
<evidence type="ECO:0000255" key="6">
    <source>
        <dbReference type="PROSITE-ProRule" id="PRU00043"/>
    </source>
</evidence>
<evidence type="ECO:0000256" key="7">
    <source>
        <dbReference type="SAM" id="MobiDB-lite"/>
    </source>
</evidence>
<evidence type="ECO:0000269" key="8">
    <source>
    </source>
</evidence>
<evidence type="ECO:0000269" key="9">
    <source>
    </source>
</evidence>
<reference key="1">
    <citation type="journal article" date="2005" name="Nature">
        <title>Genome sequence, comparative analysis and haplotype structure of the domestic dog.</title>
        <authorList>
            <person name="Lindblad-Toh K."/>
            <person name="Wade C.M."/>
            <person name="Mikkelsen T.S."/>
            <person name="Karlsson E.K."/>
            <person name="Jaffe D.B."/>
            <person name="Kamal M."/>
            <person name="Clamp M."/>
            <person name="Chang J.L."/>
            <person name="Kulbokas E.J. III"/>
            <person name="Zody M.C."/>
            <person name="Mauceli E."/>
            <person name="Xie X."/>
            <person name="Breen M."/>
            <person name="Wayne R.K."/>
            <person name="Ostrander E.A."/>
            <person name="Ponting C.P."/>
            <person name="Galibert F."/>
            <person name="Smith D.R."/>
            <person name="deJong P.J."/>
            <person name="Kirkness E.F."/>
            <person name="Alvarez P."/>
            <person name="Biagi T."/>
            <person name="Brockman W."/>
            <person name="Butler J."/>
            <person name="Chin C.-W."/>
            <person name="Cook A."/>
            <person name="Cuff J."/>
            <person name="Daly M.J."/>
            <person name="DeCaprio D."/>
            <person name="Gnerre S."/>
            <person name="Grabherr M."/>
            <person name="Kellis M."/>
            <person name="Kleber M."/>
            <person name="Bardeleben C."/>
            <person name="Goodstadt L."/>
            <person name="Heger A."/>
            <person name="Hitte C."/>
            <person name="Kim L."/>
            <person name="Koepfli K.-P."/>
            <person name="Parker H.G."/>
            <person name="Pollinger J.P."/>
            <person name="Searle S.M.J."/>
            <person name="Sutter N.B."/>
            <person name="Thomas R."/>
            <person name="Webber C."/>
            <person name="Baldwin J."/>
            <person name="Abebe A."/>
            <person name="Abouelleil A."/>
            <person name="Aftuck L."/>
            <person name="Ait-Zahra M."/>
            <person name="Aldredge T."/>
            <person name="Allen N."/>
            <person name="An P."/>
            <person name="Anderson S."/>
            <person name="Antoine C."/>
            <person name="Arachchi H."/>
            <person name="Aslam A."/>
            <person name="Ayotte L."/>
            <person name="Bachantsang P."/>
            <person name="Barry A."/>
            <person name="Bayul T."/>
            <person name="Benamara M."/>
            <person name="Berlin A."/>
            <person name="Bessette D."/>
            <person name="Blitshteyn B."/>
            <person name="Bloom T."/>
            <person name="Blye J."/>
            <person name="Boguslavskiy L."/>
            <person name="Bonnet C."/>
            <person name="Boukhgalter B."/>
            <person name="Brown A."/>
            <person name="Cahill P."/>
            <person name="Calixte N."/>
            <person name="Camarata J."/>
            <person name="Cheshatsang Y."/>
            <person name="Chu J."/>
            <person name="Citroen M."/>
            <person name="Collymore A."/>
            <person name="Cooke P."/>
            <person name="Dawoe T."/>
            <person name="Daza R."/>
            <person name="Decktor K."/>
            <person name="DeGray S."/>
            <person name="Dhargay N."/>
            <person name="Dooley K."/>
            <person name="Dooley K."/>
            <person name="Dorje P."/>
            <person name="Dorjee K."/>
            <person name="Dorris L."/>
            <person name="Duffey N."/>
            <person name="Dupes A."/>
            <person name="Egbiremolen O."/>
            <person name="Elong R."/>
            <person name="Falk J."/>
            <person name="Farina A."/>
            <person name="Faro S."/>
            <person name="Ferguson D."/>
            <person name="Ferreira P."/>
            <person name="Fisher S."/>
            <person name="FitzGerald M."/>
            <person name="Foley K."/>
            <person name="Foley C."/>
            <person name="Franke A."/>
            <person name="Friedrich D."/>
            <person name="Gage D."/>
            <person name="Garber M."/>
            <person name="Gearin G."/>
            <person name="Giannoukos G."/>
            <person name="Goode T."/>
            <person name="Goyette A."/>
            <person name="Graham J."/>
            <person name="Grandbois E."/>
            <person name="Gyaltsen K."/>
            <person name="Hafez N."/>
            <person name="Hagopian D."/>
            <person name="Hagos B."/>
            <person name="Hall J."/>
            <person name="Healy C."/>
            <person name="Hegarty R."/>
            <person name="Honan T."/>
            <person name="Horn A."/>
            <person name="Houde N."/>
            <person name="Hughes L."/>
            <person name="Hunnicutt L."/>
            <person name="Husby M."/>
            <person name="Jester B."/>
            <person name="Jones C."/>
            <person name="Kamat A."/>
            <person name="Kanga B."/>
            <person name="Kells C."/>
            <person name="Khazanovich D."/>
            <person name="Kieu A.C."/>
            <person name="Kisner P."/>
            <person name="Kumar M."/>
            <person name="Lance K."/>
            <person name="Landers T."/>
            <person name="Lara M."/>
            <person name="Lee W."/>
            <person name="Leger J.-P."/>
            <person name="Lennon N."/>
            <person name="Leuper L."/>
            <person name="LeVine S."/>
            <person name="Liu J."/>
            <person name="Liu X."/>
            <person name="Lokyitsang Y."/>
            <person name="Lokyitsang T."/>
            <person name="Lui A."/>
            <person name="Macdonald J."/>
            <person name="Major J."/>
            <person name="Marabella R."/>
            <person name="Maru K."/>
            <person name="Matthews C."/>
            <person name="McDonough S."/>
            <person name="Mehta T."/>
            <person name="Meldrim J."/>
            <person name="Melnikov A."/>
            <person name="Meneus L."/>
            <person name="Mihalev A."/>
            <person name="Mihova T."/>
            <person name="Miller K."/>
            <person name="Mittelman R."/>
            <person name="Mlenga V."/>
            <person name="Mulrain L."/>
            <person name="Munson G."/>
            <person name="Navidi A."/>
            <person name="Naylor J."/>
            <person name="Nguyen T."/>
            <person name="Nguyen N."/>
            <person name="Nguyen C."/>
            <person name="Nguyen T."/>
            <person name="Nicol R."/>
            <person name="Norbu N."/>
            <person name="Norbu C."/>
            <person name="Novod N."/>
            <person name="Nyima T."/>
            <person name="Olandt P."/>
            <person name="O'Neill B."/>
            <person name="O'Neill K."/>
            <person name="Osman S."/>
            <person name="Oyono L."/>
            <person name="Patti C."/>
            <person name="Perrin D."/>
            <person name="Phunkhang P."/>
            <person name="Pierre F."/>
            <person name="Priest M."/>
            <person name="Rachupka A."/>
            <person name="Raghuraman S."/>
            <person name="Rameau R."/>
            <person name="Ray V."/>
            <person name="Raymond C."/>
            <person name="Rege F."/>
            <person name="Rise C."/>
            <person name="Rogers J."/>
            <person name="Rogov P."/>
            <person name="Sahalie J."/>
            <person name="Settipalli S."/>
            <person name="Sharpe T."/>
            <person name="Shea T."/>
            <person name="Sheehan M."/>
            <person name="Sherpa N."/>
            <person name="Shi J."/>
            <person name="Shih D."/>
            <person name="Sloan J."/>
            <person name="Smith C."/>
            <person name="Sparrow T."/>
            <person name="Stalker J."/>
            <person name="Stange-Thomann N."/>
            <person name="Stavropoulos S."/>
            <person name="Stone C."/>
            <person name="Stone S."/>
            <person name="Sykes S."/>
            <person name="Tchuinga P."/>
            <person name="Tenzing P."/>
            <person name="Tesfaye S."/>
            <person name="Thoulutsang D."/>
            <person name="Thoulutsang Y."/>
            <person name="Topham K."/>
            <person name="Topping I."/>
            <person name="Tsamla T."/>
            <person name="Vassiliev H."/>
            <person name="Venkataraman V."/>
            <person name="Vo A."/>
            <person name="Wangchuk T."/>
            <person name="Wangdi T."/>
            <person name="Weiand M."/>
            <person name="Wilkinson J."/>
            <person name="Wilson A."/>
            <person name="Yadav S."/>
            <person name="Yang S."/>
            <person name="Yang X."/>
            <person name="Young G."/>
            <person name="Yu Q."/>
            <person name="Zainoun J."/>
            <person name="Zembek L."/>
            <person name="Zimmer A."/>
            <person name="Lander E.S."/>
        </authorList>
    </citation>
    <scope>NUCLEOTIDE SEQUENCE [LARGE SCALE GENOMIC DNA]</scope>
    <source>
        <strain>Boxer</strain>
    </source>
</reference>
<reference key="2">
    <citation type="journal article" date="2000" name="Biochem. Biophys. Res. Commun.">
        <title>Identification of a novel beta-catenin-interacting protein.</title>
        <authorList>
            <person name="Kawajiri A."/>
            <person name="Itoh N."/>
            <person name="Fukata M."/>
            <person name="Nakagawa M."/>
            <person name="Yamaga M."/>
            <person name="Iwamatsu A."/>
            <person name="Kaibuchi K."/>
        </authorList>
    </citation>
    <scope>INTERACTION WITH RAPGEF2</scope>
</reference>
<reference key="3">
    <citation type="journal article" date="2017" name="Sci. Rep.">
        <title>The E-cadherin/AmotL2 complex organizes actin filaments required for epithelial hexagonal packing and blastocyst hatching.</title>
        <authorList>
            <person name="Hildebrand S."/>
            <person name="Hultin S."/>
            <person name="Subramani A."/>
            <person name="Petropoulos S."/>
            <person name="Zhang Y."/>
            <person name="Cao X."/>
            <person name="Mpindi J."/>
            <person name="Kalloniemi O."/>
            <person name="Johansson S."/>
            <person name="Majumdar A."/>
            <person name="Lanner F."/>
            <person name="Holmgren L."/>
        </authorList>
    </citation>
    <scope>FUNCTION</scope>
    <scope>INTERACTION WITH AMOTL2</scope>
</reference>
<comment type="function">
    <text evidence="3 9">Cadherins are calcium-dependent cell adhesion proteins. They preferentially interact with themselves in a homophilic manner in connecting cells; cadherins may thus contribute to the sorting of heterogeneous cell types. CDH1 is involved in mechanisms regulating cell-cell adhesions, mobility and proliferation of epithelial cells. Promotes organization of radial actin fiber structure and cellular response to contractile forces, via its interaction with AMOTL2 which facilitates anchoring of radial actin fibers to CDH1 junction complexes at the cell membrane (PubMed:28842668). Plays a role in the early stages of desmosome cell-cell junction formation via facilitating the recruitment of DSG2 and DSP to desmosome plaques (By similarity). Has a potent invasive suppressor role. It is a ligand for integrin alpha-E/beta-7.</text>
</comment>
<comment type="function">
    <text evidence="3">E-Cad/CTF2 promotes non-amyloidogenic degradation of Abeta precursors. Has a strong inhibitory effect on APP C99 and C83 production.</text>
</comment>
<comment type="subunit">
    <text evidence="2 3 4 8 9">Homodimer; disulfide-linked (By similarity). Component of an E-cadherin/ catenin adhesion complex composed of at least E-cadherin/CDH1, beta-catenin/CTNNB1 or gamma-catenin/JUP, and potentially alpha-catenin/CTNNA1; the complex is located to adherens junctions (By similarity). Found in a complex composed of CDH1, RAP1A and PKP3; PKP3 acts as a scaffold protein within the complex, the complex is required for CDH1 localization to mature desmosome cell junctions (By similarity). Interacts with the TRPV4 and CTNNB1 complex (By similarity). Interacts with CTNND1 (By similarity). The stable association of CTNNA1 is controversial as CTNNA1 was shown not to bind to F-actin when assembled in the complex (By similarity). Alternatively, the CTNNA1-containing complex may be linked to F-actin by other proteins such as LIMA1 (By similarity). Interaction with PSEN1, cleaves CDH1 resulting in the disassociation of cadherin-based adherens junctions (CAJs) (By similarity). Interacts with AJAP1 and DLGAP5 (By similarity). Interacts with TBC1D2 (By similarity). Interacts with LIMA1 (By similarity). Interacts with CAV1 (By similarity). Interacts with PIP5K1C (By similarity). Interacts with RAB8B (By similarity). Interacts with DDR1; this stabilizes CDH1 at the cell surface and inhibits its internalization (By similarity). Interacts with RAPGEF2 (PubMed:10873669). Interacts with KLRG1 (By similarity). Forms a ternary complex composed of ADAM10, CADH1 and EPHA4; within the complex, CADH1 is cleaved by ADAM10 which disrupts adherens junctions (By similarity). Interacts with SPEF1 (By similarity). Interacts with CTNNB1 and PKP2 (By similarity). Interacts with AMOTL2; the interaction may facilitate binding of radial actin fibers to cell junction complexes (PubMed:28842668). Interacts with DSG3; the interaction is required for CDH1 localization to developing adherens junctions (By similarity).</text>
</comment>
<comment type="subcellular location">
    <subcellularLocation>
        <location evidence="3">Cell junction</location>
        <location evidence="3">Adherens junction</location>
    </subcellularLocation>
    <subcellularLocation>
        <location evidence="3">Cell membrane</location>
        <topology evidence="1">Single-pass type I membrane protein</topology>
    </subcellularLocation>
    <subcellularLocation>
        <location evidence="3">Endosome</location>
    </subcellularLocation>
    <subcellularLocation>
        <location evidence="3">Golgi apparatus</location>
        <location evidence="3">trans-Golgi network</location>
    </subcellularLocation>
    <subcellularLocation>
        <location evidence="2">Cytoplasm</location>
    </subcellularLocation>
    <subcellularLocation>
        <location evidence="3">Cell junction</location>
        <location evidence="3">Desmosome</location>
    </subcellularLocation>
    <text evidence="1 2 3">Colocalizes with DLGAP5 at sites of cell-cell contact in intestinal epithelial cells. Anchored to actin microfilaments through association with alpha-, beta- and gamma-catenin. Sequential proteolysis induced by apoptosis or calcium influx, results in translocation from sites of cell-cell contact to the cytoplasm. Colocalizes with RAB11A endosomes during its transport from the Golgi apparatus to the plasma membrane (By similarity). Recruited to desmosomes at the initial assembly phase and also accumulates progressively at mature desmosome cell-cell junctions (By similarity). Localizes to cell-cell contacts as keratinocyte differentiation progresses (By similarity).</text>
</comment>
<comment type="domain">
    <text evidence="3">Three calcium ions are usually bound at the interface of each cadherin domain and strengthen the connections, imparting a strong curvature to the full-length ectodomain.</text>
</comment>
<comment type="PTM">
    <text evidence="2 3">During apoptosis or with calcium influx, cleaved by a membrane-bound metalloproteinase (ADAM10), PS1/gamma-secretase and caspase-3 (By similarity). Processing by the metalloproteinase, induced by calcium influx, causes disruption of cell-cell adhesion and the subsequent release of beta-catenin into the cytoplasm (By similarity). The residual membrane-tethered cleavage product is rapidly degraded via an intracellular proteolytic pathway (By similarity). Cleavage by caspase-3 releases the cytoplasmic tail resulting in disintegration of the actin microfilament system (By similarity). The gamma-secretase-mediated cleavage promotes disassembly of adherens junctions (By similarity). During development of the cochlear organ of Corti, cleavage by ADAM10 at adherens junctions promotes pillar cell separation (By similarity).</text>
</comment>
<comment type="PTM">
    <text evidence="1 3">N-glycosylation at Asn-639 is essential for expression, folding and trafficking. Addition of bisecting N-acetylglucosamine by MGAT3 modulates its cell membrane location (By similarity).</text>
</comment>
<comment type="PTM">
    <text evidence="1">Ubiquitinated by a SCF complex containing SKP2, which requires prior phosphorylation by CK1/CSNK1A1. Ubiquitinated by CBLL1/HAKAI, requires prior phosphorylation at Tyr-757 (By similarity).</text>
</comment>
<comment type="PTM">
    <text evidence="2">O-glycosylated. O-manosylated by TMTC1, TMTC2, TMTC3 or TMTC4. Thr-287 and Thr-511 are O-mannosylated by TMTC2 or TMTC4 but not TMTC1 or TMTC3.</text>
</comment>
<sequence length="885" mass="97755">MGPRYGGAPALLLPLLLLLQVSSGLCQEPEPCRPGFGADSYTFTVPRRHLERGRVLGRVSFEGCTGLPRTAYVSDDTRFKVGTDGVITVKRPLQLHKPEISFLVHAWDSSRRKLSTRVRLKAATHHHHHHHDAPSKTQTEVLTFPSSQHGLRRQKRDWVIPPISCPENEKGPFPKNLVQIKSNRDKEIKVFYSITGQGADAPPVGVFIIERETGWLKVTEPLDREQIAKYILYSHAVSSNGNAVEDPMEIVITVTDQNDNKPEFTQAVFQGSVTEGALPGTSVMQVTATDADDDVNTYNAAIAYSILTQDPLLPSSMMFTINKDTGVISVLTTGLDREGVPMYTLVVQAADLQGEGLTTTATAVITVTDINDNPPIFNPTTYQGRVPENKANVEIAVLKVTDADVPDTPAWRAVYTILNNNNDQFVVTTDPVTNDGILKTTKGLDFEDKQQYVLYVTVVNVTPFEVILSTSTATVTVDVEDVNEAPIFIPCPKVVSIPEDFGVGQEITSYTAEDPDTYMEQRITYRIWRDAAGWLEVNPESGAIFTRAELDREDFEHVKNSTYEALIIAIDNGSPVATGTGTLLLVLSDVNDNGPIPEPRNMDFCQKNPQPHVINIIDPDLPPNTSPFTAELTHGASVNWTIEYNDPARESLILKPKKTLELGDYKINLKLTDNQNKDQVTTLDVFVCDCEGVVNSCKRTAPYAEAGLQVPAILGILGGILALLILILLLLLFVRRRRVVKEPLLPPEDDTRDNVYYYDEEGGGEEDQDFDLSQLHRGLDARPEVTRNDVAPTLLSVPQYRPRPANPDEIGNFIDENLKAADTDPTAPPYDSLLVFDYEGSGSEAASLSSLNSSESDQDQDYDYLNEWGNRFKKLADMYGGGEDD</sequence>
<keyword id="KW-0106">Calcium</keyword>
<keyword id="KW-0130">Cell adhesion</keyword>
<keyword id="KW-0965">Cell junction</keyword>
<keyword id="KW-1003">Cell membrane</keyword>
<keyword id="KW-0165">Cleavage on pair of basic residues</keyword>
<keyword id="KW-0963">Cytoplasm</keyword>
<keyword id="KW-1015">Disulfide bond</keyword>
<keyword id="KW-0967">Endosome</keyword>
<keyword id="KW-0325">Glycoprotein</keyword>
<keyword id="KW-0333">Golgi apparatus</keyword>
<keyword id="KW-0472">Membrane</keyword>
<keyword id="KW-0479">Metal-binding</keyword>
<keyword id="KW-0597">Phosphoprotein</keyword>
<keyword id="KW-1185">Reference proteome</keyword>
<keyword id="KW-0677">Repeat</keyword>
<keyword id="KW-0732">Signal</keyword>
<keyword id="KW-0812">Transmembrane</keyword>
<keyword id="KW-1133">Transmembrane helix</keyword>
<keyword id="KW-0832">Ubl conjugation</keyword>
<dbReference type="EMBL" id="AAEX03004114">
    <property type="status" value="NOT_ANNOTATED_CDS"/>
    <property type="molecule type" value="Genomic_DNA"/>
</dbReference>
<dbReference type="EMBL" id="AAEX03004115">
    <property type="status" value="NOT_ANNOTATED_CDS"/>
    <property type="molecule type" value="Genomic_DNA"/>
</dbReference>
<dbReference type="EMBL" id="AAEX03004116">
    <property type="status" value="NOT_ANNOTATED_CDS"/>
    <property type="molecule type" value="Genomic_DNA"/>
</dbReference>
<dbReference type="RefSeq" id="NP_001274054.1">
    <property type="nucleotide sequence ID" value="NM_001287125.2"/>
</dbReference>
<dbReference type="SMR" id="F1PAA9"/>
<dbReference type="BioGRID" id="139974">
    <property type="interactions" value="407"/>
</dbReference>
<dbReference type="CORUM" id="F1PAA9"/>
<dbReference type="DIP" id="DIP-61284N"/>
<dbReference type="FunCoup" id="F1PAA9">
    <property type="interactions" value="205"/>
</dbReference>
<dbReference type="IntAct" id="F1PAA9">
    <property type="interactions" value="527"/>
</dbReference>
<dbReference type="MINT" id="F1PAA9"/>
<dbReference type="STRING" id="9615.ENSCAFP00000030112"/>
<dbReference type="GlyCosmos" id="F1PAA9">
    <property type="glycosylation" value="11 sites, No reported glycans"/>
</dbReference>
<dbReference type="PaxDb" id="9612-ENSCAFP00000030108"/>
<dbReference type="Ensembl" id="ENSCAFT00030026548.1">
    <property type="protein sequence ID" value="ENSCAFP00030023171.1"/>
    <property type="gene ID" value="ENSCAFG00030014198.1"/>
</dbReference>
<dbReference type="Ensembl" id="ENSCAFT00040020426.1">
    <property type="protein sequence ID" value="ENSCAFP00040017722.1"/>
    <property type="gene ID" value="ENSCAFG00040010861.1"/>
</dbReference>
<dbReference type="GeneID" id="442858"/>
<dbReference type="KEGG" id="cfa:442858"/>
<dbReference type="CTD" id="999"/>
<dbReference type="eggNOG" id="KOG3594">
    <property type="taxonomic scope" value="Eukaryota"/>
</dbReference>
<dbReference type="InParanoid" id="F1PAA9"/>
<dbReference type="OMA" id="GAVNNCM"/>
<dbReference type="OrthoDB" id="6079678at2759"/>
<dbReference type="TreeFam" id="TF316817"/>
<dbReference type="Reactome" id="R-CFA-1474228">
    <property type="pathway name" value="Degradation of the extracellular matrix"/>
</dbReference>
<dbReference type="Reactome" id="R-CFA-216083">
    <property type="pathway name" value="Integrin cell surface interactions"/>
</dbReference>
<dbReference type="Reactome" id="R-CFA-351906">
    <property type="pathway name" value="Apoptotic cleavage of cell adhesion proteins"/>
</dbReference>
<dbReference type="Reactome" id="R-CFA-418990">
    <property type="pathway name" value="Adherens junctions interactions"/>
</dbReference>
<dbReference type="Proteomes" id="UP000002254">
    <property type="component" value="Unplaced"/>
</dbReference>
<dbReference type="Proteomes" id="UP000694429">
    <property type="component" value="Chromosome 5"/>
</dbReference>
<dbReference type="Proteomes" id="UP000694542">
    <property type="component" value="Chromosome 5"/>
</dbReference>
<dbReference type="Proteomes" id="UP000805418">
    <property type="component" value="Unplaced"/>
</dbReference>
<dbReference type="Bgee" id="ENSCAFG00000020305">
    <property type="expression patterns" value="Expressed in mucosa of urinary bladder and 41 other cell types or tissues"/>
</dbReference>
<dbReference type="GO" id="GO:0005912">
    <property type="term" value="C:adherens junction"/>
    <property type="evidence" value="ECO:0000250"/>
    <property type="project" value="UniProtKB"/>
</dbReference>
<dbReference type="GO" id="GO:0043296">
    <property type="term" value="C:apical junction complex"/>
    <property type="evidence" value="ECO:0000318"/>
    <property type="project" value="GO_Central"/>
</dbReference>
<dbReference type="GO" id="GO:0016342">
    <property type="term" value="C:catenin complex"/>
    <property type="evidence" value="ECO:0000318"/>
    <property type="project" value="GO_Central"/>
</dbReference>
<dbReference type="GO" id="GO:0005911">
    <property type="term" value="C:cell-cell junction"/>
    <property type="evidence" value="ECO:0000314"/>
    <property type="project" value="MGI"/>
</dbReference>
<dbReference type="GO" id="GO:0005737">
    <property type="term" value="C:cytoplasm"/>
    <property type="evidence" value="ECO:0000250"/>
    <property type="project" value="UniProtKB"/>
</dbReference>
<dbReference type="GO" id="GO:0030057">
    <property type="term" value="C:desmosome"/>
    <property type="evidence" value="ECO:0007669"/>
    <property type="project" value="UniProtKB-SubCell"/>
</dbReference>
<dbReference type="GO" id="GO:0005768">
    <property type="term" value="C:endosome"/>
    <property type="evidence" value="ECO:0007669"/>
    <property type="project" value="UniProtKB-SubCell"/>
</dbReference>
<dbReference type="GO" id="GO:0016600">
    <property type="term" value="C:flotillin complex"/>
    <property type="evidence" value="ECO:0000318"/>
    <property type="project" value="GO_Central"/>
</dbReference>
<dbReference type="GO" id="GO:0005794">
    <property type="term" value="C:Golgi apparatus"/>
    <property type="evidence" value="ECO:0007669"/>
    <property type="project" value="UniProtKB-SubCell"/>
</dbReference>
<dbReference type="GO" id="GO:0005886">
    <property type="term" value="C:plasma membrane"/>
    <property type="evidence" value="ECO:0000314"/>
    <property type="project" value="UniProtKB"/>
</dbReference>
<dbReference type="GO" id="GO:0008013">
    <property type="term" value="F:beta-catenin binding"/>
    <property type="evidence" value="ECO:0000318"/>
    <property type="project" value="GO_Central"/>
</dbReference>
<dbReference type="GO" id="GO:0045296">
    <property type="term" value="F:cadherin binding"/>
    <property type="evidence" value="ECO:0000318"/>
    <property type="project" value="GO_Central"/>
</dbReference>
<dbReference type="GO" id="GO:0005509">
    <property type="term" value="F:calcium ion binding"/>
    <property type="evidence" value="ECO:0007669"/>
    <property type="project" value="InterPro"/>
</dbReference>
<dbReference type="GO" id="GO:0034332">
    <property type="term" value="P:adherens junction organization"/>
    <property type="evidence" value="ECO:0000318"/>
    <property type="project" value="GO_Central"/>
</dbReference>
<dbReference type="GO" id="GO:0016339">
    <property type="term" value="P:calcium-dependent cell-cell adhesion via plasma membrane cell adhesion molecules"/>
    <property type="evidence" value="ECO:0000318"/>
    <property type="project" value="GO_Central"/>
</dbReference>
<dbReference type="GO" id="GO:0016477">
    <property type="term" value="P:cell migration"/>
    <property type="evidence" value="ECO:0000318"/>
    <property type="project" value="GO_Central"/>
</dbReference>
<dbReference type="GO" id="GO:0000902">
    <property type="term" value="P:cell morphogenesis"/>
    <property type="evidence" value="ECO:0000318"/>
    <property type="project" value="GO_Central"/>
</dbReference>
<dbReference type="GO" id="GO:0044331">
    <property type="term" value="P:cell-cell adhesion mediated by cadherin"/>
    <property type="evidence" value="ECO:0000318"/>
    <property type="project" value="GO_Central"/>
</dbReference>
<dbReference type="GO" id="GO:0007043">
    <property type="term" value="P:cell-cell junction assembly"/>
    <property type="evidence" value="ECO:0000318"/>
    <property type="project" value="GO_Central"/>
</dbReference>
<dbReference type="GO" id="GO:0002159">
    <property type="term" value="P:desmosome assembly"/>
    <property type="evidence" value="ECO:0000250"/>
    <property type="project" value="UniProtKB"/>
</dbReference>
<dbReference type="GO" id="GO:0007156">
    <property type="term" value="P:homophilic cell adhesion via plasma membrane adhesion molecules"/>
    <property type="evidence" value="ECO:0007669"/>
    <property type="project" value="InterPro"/>
</dbReference>
<dbReference type="GO" id="GO:1903829">
    <property type="term" value="P:positive regulation of protein localization"/>
    <property type="evidence" value="ECO:0000250"/>
    <property type="project" value="UniProtKB"/>
</dbReference>
<dbReference type="GO" id="GO:0010468">
    <property type="term" value="P:regulation of gene expression"/>
    <property type="evidence" value="ECO:0000250"/>
    <property type="project" value="UniProtKB"/>
</dbReference>
<dbReference type="GO" id="GO:0007416">
    <property type="term" value="P:synapse assembly"/>
    <property type="evidence" value="ECO:0000318"/>
    <property type="project" value="GO_Central"/>
</dbReference>
<dbReference type="CDD" id="cd00031">
    <property type="entry name" value="CA_like"/>
    <property type="match status" value="1"/>
</dbReference>
<dbReference type="CDD" id="cd11304">
    <property type="entry name" value="Cadherin_repeat"/>
    <property type="match status" value="3"/>
</dbReference>
<dbReference type="FunFam" id="2.60.40.60:FF:000011">
    <property type="entry name" value="Cadherin 1"/>
    <property type="match status" value="1"/>
</dbReference>
<dbReference type="FunFam" id="2.60.40.60:FF:000191">
    <property type="entry name" value="Cadherin 1"/>
    <property type="match status" value="1"/>
</dbReference>
<dbReference type="FunFam" id="2.60.40.60:FF:000019">
    <property type="entry name" value="Cadherin 2"/>
    <property type="match status" value="1"/>
</dbReference>
<dbReference type="FunFam" id="2.60.40.60:FF:000022">
    <property type="entry name" value="Cadherin 2"/>
    <property type="match status" value="1"/>
</dbReference>
<dbReference type="FunFam" id="2.60.40.60:FF:000027">
    <property type="entry name" value="Cadherin 2"/>
    <property type="match status" value="1"/>
</dbReference>
<dbReference type="FunFam" id="4.10.900.10:FF:000001">
    <property type="entry name" value="Cadherin 2"/>
    <property type="match status" value="1"/>
</dbReference>
<dbReference type="FunFam" id="2.60.40.60:FF:000031">
    <property type="entry name" value="Cadherin 3"/>
    <property type="match status" value="1"/>
</dbReference>
<dbReference type="Gene3D" id="2.60.40.60">
    <property type="entry name" value="Cadherins"/>
    <property type="match status" value="6"/>
</dbReference>
<dbReference type="Gene3D" id="4.10.900.10">
    <property type="entry name" value="TCF3-CBD (Catenin binding domain)"/>
    <property type="match status" value="1"/>
</dbReference>
<dbReference type="InterPro" id="IPR039808">
    <property type="entry name" value="Cadherin"/>
</dbReference>
<dbReference type="InterPro" id="IPR002126">
    <property type="entry name" value="Cadherin-like_dom"/>
</dbReference>
<dbReference type="InterPro" id="IPR015919">
    <property type="entry name" value="Cadherin-like_sf"/>
</dbReference>
<dbReference type="InterPro" id="IPR020894">
    <property type="entry name" value="Cadherin_CS"/>
</dbReference>
<dbReference type="InterPro" id="IPR014868">
    <property type="entry name" value="Cadherin_pro_dom"/>
</dbReference>
<dbReference type="InterPro" id="IPR000233">
    <property type="entry name" value="Cadherin_Y-type_LIR"/>
</dbReference>
<dbReference type="InterPro" id="IPR027397">
    <property type="entry name" value="Catenin-bd_sf"/>
</dbReference>
<dbReference type="PANTHER" id="PTHR24027:SF319">
    <property type="entry name" value="CADHERIN-1"/>
    <property type="match status" value="1"/>
</dbReference>
<dbReference type="PANTHER" id="PTHR24027">
    <property type="entry name" value="CADHERIN-23"/>
    <property type="match status" value="1"/>
</dbReference>
<dbReference type="Pfam" id="PF01049">
    <property type="entry name" value="CADH_Y-type_LIR"/>
    <property type="match status" value="1"/>
</dbReference>
<dbReference type="Pfam" id="PF00028">
    <property type="entry name" value="Cadherin"/>
    <property type="match status" value="5"/>
</dbReference>
<dbReference type="Pfam" id="PF08758">
    <property type="entry name" value="Cadherin_pro"/>
    <property type="match status" value="1"/>
</dbReference>
<dbReference type="PRINTS" id="PR00205">
    <property type="entry name" value="CADHERIN"/>
</dbReference>
<dbReference type="SMART" id="SM00112">
    <property type="entry name" value="CA"/>
    <property type="match status" value="4"/>
</dbReference>
<dbReference type="SMART" id="SM01055">
    <property type="entry name" value="Cadherin_pro"/>
    <property type="match status" value="1"/>
</dbReference>
<dbReference type="SUPFAM" id="SSF49313">
    <property type="entry name" value="Cadherin-like"/>
    <property type="match status" value="6"/>
</dbReference>
<dbReference type="PROSITE" id="PS00232">
    <property type="entry name" value="CADHERIN_1"/>
    <property type="match status" value="3"/>
</dbReference>
<dbReference type="PROSITE" id="PS50268">
    <property type="entry name" value="CADHERIN_2"/>
    <property type="match status" value="4"/>
</dbReference>
<name>CADH1_CANLF</name>
<organism>
    <name type="scientific">Canis lupus familiaris</name>
    <name type="common">Dog</name>
    <name type="synonym">Canis familiaris</name>
    <dbReference type="NCBI Taxonomy" id="9615"/>
    <lineage>
        <taxon>Eukaryota</taxon>
        <taxon>Metazoa</taxon>
        <taxon>Chordata</taxon>
        <taxon>Craniata</taxon>
        <taxon>Vertebrata</taxon>
        <taxon>Euteleostomi</taxon>
        <taxon>Mammalia</taxon>
        <taxon>Eutheria</taxon>
        <taxon>Laurasiatheria</taxon>
        <taxon>Carnivora</taxon>
        <taxon>Caniformia</taxon>
        <taxon>Canidae</taxon>
        <taxon>Canis</taxon>
    </lineage>
</organism>
<accession>F1PAA9</accession>